<keyword id="KW-0903">Direct protein sequencing</keyword>
<keyword id="KW-1015">Disulfide bond</keyword>
<keyword id="KW-0960">Knottin</keyword>
<keyword id="KW-0964">Secreted</keyword>
<keyword id="KW-0800">Toxin</keyword>
<evidence type="ECO:0000250" key="1"/>
<evidence type="ECO:0000269" key="2">
    <source>
    </source>
</evidence>
<evidence type="ECO:0000303" key="3">
    <source>
    </source>
</evidence>
<evidence type="ECO:0000305" key="4"/>
<evidence type="ECO:0000305" key="5">
    <source>
    </source>
</evidence>
<accession>P0DMA2</accession>
<proteinExistence type="evidence at protein level"/>
<sequence>TCLEIGEFCGKPMMVGSLCCSPGWCFFICVG</sequence>
<organism>
    <name type="scientific">Conus pictus</name>
    <name type="common">Cone snail</name>
    <dbReference type="NCBI Taxonomy" id="1042615"/>
    <lineage>
        <taxon>Eukaryota</taxon>
        <taxon>Metazoa</taxon>
        <taxon>Spiralia</taxon>
        <taxon>Lophotrochozoa</taxon>
        <taxon>Mollusca</taxon>
        <taxon>Gastropoda</taxon>
        <taxon>Caenogastropoda</taxon>
        <taxon>Neogastropoda</taxon>
        <taxon>Conoidea</taxon>
        <taxon>Conidae</taxon>
        <taxon>Conus</taxon>
        <taxon>Sciteconus</taxon>
    </lineage>
</organism>
<comment type="subcellular location">
    <subcellularLocation>
        <location evidence="2">Secreted</location>
    </subcellularLocation>
</comment>
<comment type="tissue specificity">
    <text evidence="5">Expressed by the venom duct.</text>
</comment>
<comment type="domain">
    <text evidence="4">The cysteine framework is VI/VII (C-C-CC-C-C).</text>
</comment>
<comment type="domain">
    <text evidence="1">The presence of a 'disulfide through disulfide knot' structurally defines this protein as a knottin.</text>
</comment>
<comment type="mass spectrometry">
    <text>monoisotopic.</text>
</comment>
<comment type="similarity">
    <text evidence="4">Belongs to the conotoxin O1 superfamily.</text>
</comment>
<dbReference type="ConoServer" id="5860">
    <property type="toxin name" value="Pc6b"/>
</dbReference>
<dbReference type="GO" id="GO:0005576">
    <property type="term" value="C:extracellular region"/>
    <property type="evidence" value="ECO:0007669"/>
    <property type="project" value="UniProtKB-SubCell"/>
</dbReference>
<dbReference type="GO" id="GO:0008200">
    <property type="term" value="F:ion channel inhibitor activity"/>
    <property type="evidence" value="ECO:0007669"/>
    <property type="project" value="InterPro"/>
</dbReference>
<dbReference type="GO" id="GO:0090729">
    <property type="term" value="F:toxin activity"/>
    <property type="evidence" value="ECO:0007669"/>
    <property type="project" value="UniProtKB-KW"/>
</dbReference>
<dbReference type="InterPro" id="IPR012321">
    <property type="entry name" value="Conotoxin_omega-typ_CS"/>
</dbReference>
<dbReference type="PROSITE" id="PS60004">
    <property type="entry name" value="OMEGA_CONOTOXIN"/>
    <property type="match status" value="1"/>
</dbReference>
<protein>
    <recommendedName>
        <fullName evidence="3">Conotoxin pc6b</fullName>
    </recommendedName>
</protein>
<feature type="peptide" id="PRO_0000424799" description="Conotoxin pc6b" evidence="2">
    <location>
        <begin position="1"/>
        <end position="31"/>
    </location>
</feature>
<feature type="disulfide bond" evidence="1">
    <location>
        <begin position="2"/>
        <end position="20"/>
    </location>
</feature>
<feature type="disulfide bond" evidence="1">
    <location>
        <begin position="9"/>
        <end position="25"/>
    </location>
</feature>
<feature type="disulfide bond" evidence="1">
    <location>
        <begin position="19"/>
        <end position="29"/>
    </location>
</feature>
<name>O16B_CONPB</name>
<reference key="1">
    <citation type="journal article" date="2013" name="Peptides">
        <title>Unraveling the peptidome of the South African cone snails Conus pictus and Conus natalis.</title>
        <authorList>
            <person name="Peigneur S."/>
            <person name="Van Der Haegen A."/>
            <person name="Moller C."/>
            <person name="Waelkens E."/>
            <person name="Diego-Garcia E."/>
            <person name="Mari F."/>
            <person name="Naude R."/>
            <person name="Tytgat J."/>
        </authorList>
    </citation>
    <scope>PROTEIN SEQUENCE</scope>
    <scope>SUBCELLULAR LOCATION</scope>
    <scope>MASS SPECTROMETRY</scope>
    <source>
        <tissue>Venom</tissue>
    </source>
</reference>